<reference key="1">
    <citation type="journal article" date="2012" name="Peptides">
        <title>Peptide fingerprinting of the neurotoxic fractions isolated from the secretions of sea anemones Stichodactyla helianthus and Bunodosoma granulifera. New members of the APETx-like family identified by a 454 pyrosequencing approach.</title>
        <authorList>
            <person name="Rodriguez A.A."/>
            <person name="Cassoli J.S."/>
            <person name="Sa F."/>
            <person name="Dong Z.Q."/>
            <person name="de Freitas J.C."/>
            <person name="Pimenta A.M."/>
            <person name="de Lima M.E."/>
            <person name="Konno K."/>
            <person name="Lee S.M."/>
            <person name="Garateix A."/>
            <person name="Zaharenko A.J."/>
        </authorList>
    </citation>
    <scope>NUCLEOTIDE SEQUENCE [MRNA]</scope>
</reference>
<accession>G0W2H7</accession>
<proteinExistence type="evidence at transcript level"/>
<comment type="function">
    <text evidence="1">Potently and selectively inhibits voltage-gated potassium channels Kv11/KCNH/ERG. Acts as a gating-modifier toxin that shifts the voltage-dependence of ERG activation in the positive direction and suppresses its current amplitudes elicited by strong depolarizing pulses that maximally activate the channels.</text>
</comment>
<comment type="subcellular location">
    <subcellularLocation>
        <location evidence="4">Secreted</location>
    </subcellularLocation>
    <subcellularLocation>
        <location evidence="4">Nematocyst</location>
    </subcellularLocation>
</comment>
<comment type="miscellaneous">
    <text evidence="2">Negative results: does not show effect on crabs.</text>
</comment>
<comment type="miscellaneous">
    <text evidence="5">May correspond to the Bg30.66b fraction with a molecular mass of 4593.5 Da (with residues Gly and Thr at the N-terminus of the fragment (assigned by homology)).</text>
</comment>
<comment type="similarity">
    <text evidence="4">Belongs to the sea anemone type 3 (BDS) potassium channel toxin family.</text>
</comment>
<name>BDS3_BUNGR</name>
<dbReference type="EMBL" id="HE577144">
    <property type="protein sequence ID" value="CCC86602.1"/>
    <property type="molecule type" value="mRNA"/>
</dbReference>
<dbReference type="SMR" id="G0W2H7"/>
<dbReference type="GO" id="GO:0005576">
    <property type="term" value="C:extracellular region"/>
    <property type="evidence" value="ECO:0007669"/>
    <property type="project" value="UniProtKB-SubCell"/>
</dbReference>
<dbReference type="GO" id="GO:0042151">
    <property type="term" value="C:nematocyst"/>
    <property type="evidence" value="ECO:0007669"/>
    <property type="project" value="UniProtKB-SubCell"/>
</dbReference>
<dbReference type="GO" id="GO:0008200">
    <property type="term" value="F:ion channel inhibitor activity"/>
    <property type="evidence" value="ECO:0007669"/>
    <property type="project" value="InterPro"/>
</dbReference>
<dbReference type="GO" id="GO:0015459">
    <property type="term" value="F:potassium channel regulator activity"/>
    <property type="evidence" value="ECO:0007669"/>
    <property type="project" value="UniProtKB-KW"/>
</dbReference>
<dbReference type="GO" id="GO:0090729">
    <property type="term" value="F:toxin activity"/>
    <property type="evidence" value="ECO:0007669"/>
    <property type="project" value="UniProtKB-KW"/>
</dbReference>
<dbReference type="Gene3D" id="2.20.20.10">
    <property type="entry name" value="Anthopleurin-A"/>
    <property type="match status" value="1"/>
</dbReference>
<dbReference type="InterPro" id="IPR012414">
    <property type="entry name" value="BDS_K_chnl_tox"/>
</dbReference>
<dbReference type="InterPro" id="IPR023355">
    <property type="entry name" value="Myo_ane_neurotoxin_sf"/>
</dbReference>
<dbReference type="Pfam" id="PF07936">
    <property type="entry name" value="Defensin_4"/>
    <property type="match status" value="1"/>
</dbReference>
<dbReference type="SUPFAM" id="SSF57392">
    <property type="entry name" value="Defensin-like"/>
    <property type="match status" value="1"/>
</dbReference>
<sequence length="41" mass="4429">PCFCGKTVGIYWFALYSCPGGYGYTGHCGHFMGVCCYPANP</sequence>
<feature type="chain" id="PRO_0000433586" description="U-AITX-Bg1a">
    <location>
        <begin position="1" status="less than"/>
        <end position="41"/>
    </location>
</feature>
<feature type="disulfide bond" evidence="1">
    <location>
        <begin position="2"/>
        <end position="35"/>
    </location>
</feature>
<feature type="disulfide bond" evidence="1">
    <location>
        <begin position="4"/>
        <end position="28"/>
    </location>
</feature>
<feature type="disulfide bond" evidence="1">
    <location>
        <begin position="18"/>
        <end position="36"/>
    </location>
</feature>
<feature type="non-terminal residue">
    <location>
        <position position="1"/>
    </location>
</feature>
<keyword id="KW-0165">Cleavage on pair of basic residues</keyword>
<keyword id="KW-1015">Disulfide bond</keyword>
<keyword id="KW-0872">Ion channel impairing toxin</keyword>
<keyword id="KW-0166">Nematocyst</keyword>
<keyword id="KW-0528">Neurotoxin</keyword>
<keyword id="KW-0632">Potassium channel impairing toxin</keyword>
<keyword id="KW-0964">Secreted</keyword>
<keyword id="KW-0800">Toxin</keyword>
<keyword id="KW-1220">Voltage-gated potassium channel impairing toxin</keyword>
<organism>
    <name type="scientific">Bunodosoma granuliferum</name>
    <name type="common">Red warty sea anemone</name>
    <dbReference type="NCBI Taxonomy" id="31164"/>
    <lineage>
        <taxon>Eukaryota</taxon>
        <taxon>Metazoa</taxon>
        <taxon>Cnidaria</taxon>
        <taxon>Anthozoa</taxon>
        <taxon>Hexacorallia</taxon>
        <taxon>Actiniaria</taxon>
        <taxon>Actiniidae</taxon>
        <taxon>Bunodosoma</taxon>
    </lineage>
</organism>
<protein>
    <recommendedName>
        <fullName evidence="3">U-AITX-Bg1a</fullName>
    </recommendedName>
</protein>
<evidence type="ECO:0000250" key="1">
    <source>
        <dbReference type="UniProtKB" id="P61541"/>
    </source>
</evidence>
<evidence type="ECO:0000269" key="2">
    <source>
    </source>
</evidence>
<evidence type="ECO:0000303" key="3">
    <source>
    </source>
</evidence>
<evidence type="ECO:0000305" key="4"/>
<evidence type="ECO:0000305" key="5">
    <source>
    </source>
</evidence>